<name>ARGJ_GEOSE</name>
<feature type="chain" id="PRO_0000002119" description="Arginine biosynthesis bifunctional protein ArgJ alpha chain" evidence="1">
    <location>
        <begin position="1"/>
        <end position="196"/>
    </location>
</feature>
<feature type="chain" id="PRO_0000002120" description="Arginine biosynthesis bifunctional protein ArgJ beta chain" evidence="1">
    <location>
        <begin position="197"/>
        <end position="410"/>
    </location>
</feature>
<feature type="active site" description="Nucleophile" evidence="1">
    <location>
        <position position="197"/>
    </location>
</feature>
<feature type="binding site" evidence="1">
    <location>
        <position position="160"/>
    </location>
    <ligand>
        <name>substrate</name>
    </ligand>
</feature>
<feature type="binding site" evidence="1">
    <location>
        <position position="186"/>
    </location>
    <ligand>
        <name>substrate</name>
    </ligand>
</feature>
<feature type="binding site" evidence="1">
    <location>
        <position position="197"/>
    </location>
    <ligand>
        <name>substrate</name>
    </ligand>
</feature>
<feature type="binding site" evidence="1">
    <location>
        <position position="283"/>
    </location>
    <ligand>
        <name>substrate</name>
    </ligand>
</feature>
<feature type="binding site" evidence="1">
    <location>
        <position position="405"/>
    </location>
    <ligand>
        <name>substrate</name>
    </ligand>
</feature>
<feature type="binding site" evidence="1">
    <location>
        <position position="410"/>
    </location>
    <ligand>
        <name>substrate</name>
    </ligand>
</feature>
<feature type="site" description="Involved in the stabilization of negative charge on the oxyanion by the formation of the oxyanion hole" evidence="1">
    <location>
        <position position="123"/>
    </location>
</feature>
<feature type="site" description="Involved in the stabilization of negative charge on the oxyanion by the formation of the oxyanion hole" evidence="1">
    <location>
        <position position="124"/>
    </location>
</feature>
<feature type="site" description="Cleavage; by autolysis">
    <location>
        <begin position="196"/>
        <end position="197"/>
    </location>
</feature>
<feature type="mutagenesis site" description="No autoproteolysis; loss of activity." evidence="3">
    <original>T</original>
    <variation>G</variation>
    <location>
        <position position="197"/>
    </location>
</feature>
<feature type="mutagenesis site" description="Low rate of intramolecular cleavage; loss of activity." evidence="3">
    <original>T</original>
    <variation>S</variation>
    <variation>C</variation>
    <location>
        <position position="197"/>
    </location>
</feature>
<protein>
    <recommendedName>
        <fullName evidence="1">Arginine biosynthesis bifunctional protein ArgJ</fullName>
    </recommendedName>
    <domain>
        <recommendedName>
            <fullName evidence="1">Glutamate N-acetyltransferase</fullName>
            <ecNumber evidence="1 2">2.3.1.35</ecNumber>
        </recommendedName>
        <alternativeName>
            <fullName evidence="1">Ornithine acetyltransferase</fullName>
            <shortName evidence="1 4">OATase</shortName>
        </alternativeName>
        <alternativeName>
            <fullName evidence="1">Ornithine transacetylase</fullName>
        </alternativeName>
    </domain>
    <domain>
        <recommendedName>
            <fullName evidence="1">Amino-acid acetyltransferase</fullName>
            <ecNumber evidence="1 2">2.3.1.1</ecNumber>
        </recommendedName>
        <alternativeName>
            <fullName evidence="1">N-acetylglutamate synthase</fullName>
            <shortName evidence="1 4">AGSase</shortName>
        </alternativeName>
    </domain>
    <component>
        <recommendedName>
            <fullName evidence="1">Arginine biosynthesis bifunctional protein ArgJ alpha chain</fullName>
        </recommendedName>
    </component>
    <component>
        <recommendedName>
            <fullName evidence="1">Arginine biosynthesis bifunctional protein ArgJ beta chain</fullName>
        </recommendedName>
    </component>
</protein>
<proteinExistence type="evidence at protein level"/>
<gene>
    <name evidence="1" type="primary">argJ</name>
</gene>
<accession>Q07908</accession>
<dbReference type="EC" id="2.3.1.35" evidence="1 2"/>
<dbReference type="EC" id="2.3.1.1" evidence="1 2"/>
<dbReference type="EMBL" id="L06036">
    <property type="protein sequence ID" value="AAA22197.1"/>
    <property type="molecule type" value="Genomic_DNA"/>
</dbReference>
<dbReference type="PIR" id="I39766">
    <property type="entry name" value="I39766"/>
</dbReference>
<dbReference type="SMR" id="Q07908"/>
<dbReference type="MEROPS" id="T05.002"/>
<dbReference type="KEGG" id="ag:AAA22197"/>
<dbReference type="SABIO-RK" id="Q07908"/>
<dbReference type="UniPathway" id="UPA00068">
    <property type="reaction ID" value="UER00106"/>
</dbReference>
<dbReference type="UniPathway" id="UPA00068">
    <property type="reaction ID" value="UER00111"/>
</dbReference>
<dbReference type="GO" id="GO:0005737">
    <property type="term" value="C:cytoplasm"/>
    <property type="evidence" value="ECO:0007669"/>
    <property type="project" value="UniProtKB-SubCell"/>
</dbReference>
<dbReference type="GO" id="GO:0004358">
    <property type="term" value="F:glutamate N-acetyltransferase activity"/>
    <property type="evidence" value="ECO:0007669"/>
    <property type="project" value="UniProtKB-UniRule"/>
</dbReference>
<dbReference type="GO" id="GO:0004042">
    <property type="term" value="F:L-glutamate N-acetyltransferase activity"/>
    <property type="evidence" value="ECO:0007669"/>
    <property type="project" value="UniProtKB-UniRule"/>
</dbReference>
<dbReference type="GO" id="GO:0006526">
    <property type="term" value="P:L-arginine biosynthetic process"/>
    <property type="evidence" value="ECO:0007669"/>
    <property type="project" value="UniProtKB-UniRule"/>
</dbReference>
<dbReference type="GO" id="GO:0006592">
    <property type="term" value="P:ornithine biosynthetic process"/>
    <property type="evidence" value="ECO:0007669"/>
    <property type="project" value="TreeGrafter"/>
</dbReference>
<dbReference type="CDD" id="cd02152">
    <property type="entry name" value="OAT"/>
    <property type="match status" value="1"/>
</dbReference>
<dbReference type="FunFam" id="3.10.20.340:FF:000001">
    <property type="entry name" value="Arginine biosynthesis bifunctional protein ArgJ, chloroplastic"/>
    <property type="match status" value="1"/>
</dbReference>
<dbReference type="FunFam" id="3.60.70.12:FF:000001">
    <property type="entry name" value="Arginine biosynthesis bifunctional protein ArgJ, chloroplastic"/>
    <property type="match status" value="1"/>
</dbReference>
<dbReference type="FunFam" id="3.30.2330.10:FF:000001">
    <property type="entry name" value="Arginine biosynthesis bifunctional protein ArgJ, mitochondrial"/>
    <property type="match status" value="1"/>
</dbReference>
<dbReference type="Gene3D" id="3.30.2330.10">
    <property type="entry name" value="arginine biosynthesis bifunctional protein suprefamily"/>
    <property type="match status" value="1"/>
</dbReference>
<dbReference type="Gene3D" id="3.10.20.340">
    <property type="entry name" value="ArgJ beta chain, C-terminal domain"/>
    <property type="match status" value="1"/>
</dbReference>
<dbReference type="Gene3D" id="3.60.70.12">
    <property type="entry name" value="L-amino peptidase D-ALA esterase/amidase"/>
    <property type="match status" value="1"/>
</dbReference>
<dbReference type="HAMAP" id="MF_01106">
    <property type="entry name" value="ArgJ"/>
    <property type="match status" value="1"/>
</dbReference>
<dbReference type="InterPro" id="IPR002813">
    <property type="entry name" value="Arg_biosynth_ArgJ"/>
</dbReference>
<dbReference type="InterPro" id="IPR016117">
    <property type="entry name" value="ArgJ-like_dom_sf"/>
</dbReference>
<dbReference type="InterPro" id="IPR042195">
    <property type="entry name" value="ArgJ_beta_C"/>
</dbReference>
<dbReference type="NCBIfam" id="TIGR00120">
    <property type="entry name" value="ArgJ"/>
    <property type="match status" value="1"/>
</dbReference>
<dbReference type="NCBIfam" id="NF003802">
    <property type="entry name" value="PRK05388.1"/>
    <property type="match status" value="1"/>
</dbReference>
<dbReference type="PANTHER" id="PTHR23100">
    <property type="entry name" value="ARGININE BIOSYNTHESIS BIFUNCTIONAL PROTEIN ARGJ"/>
    <property type="match status" value="1"/>
</dbReference>
<dbReference type="PANTHER" id="PTHR23100:SF0">
    <property type="entry name" value="ARGININE BIOSYNTHESIS BIFUNCTIONAL PROTEIN ARGJ, MITOCHONDRIAL"/>
    <property type="match status" value="1"/>
</dbReference>
<dbReference type="Pfam" id="PF01960">
    <property type="entry name" value="ArgJ"/>
    <property type="match status" value="1"/>
</dbReference>
<dbReference type="SUPFAM" id="SSF56266">
    <property type="entry name" value="DmpA/ArgJ-like"/>
    <property type="match status" value="1"/>
</dbReference>
<comment type="function">
    <text evidence="2">Catalyzes two activities which are involved in the cyclic version of arginine biosynthesis: the synthesis of N-acetylglutamate from glutamate and acetyl-CoA as the acetyl donor, and of ornithine by transacetylation between N(2)-acetylornithine and glutamate.</text>
</comment>
<comment type="catalytic activity">
    <reaction evidence="2">
        <text>N(2)-acetyl-L-ornithine + L-glutamate = N-acetyl-L-glutamate + L-ornithine</text>
        <dbReference type="Rhea" id="RHEA:15349"/>
        <dbReference type="ChEBI" id="CHEBI:29985"/>
        <dbReference type="ChEBI" id="CHEBI:44337"/>
        <dbReference type="ChEBI" id="CHEBI:46911"/>
        <dbReference type="ChEBI" id="CHEBI:57805"/>
        <dbReference type="EC" id="2.3.1.35"/>
    </reaction>
</comment>
<comment type="catalytic activity">
    <reaction evidence="2">
        <text>L-glutamate + acetyl-CoA = N-acetyl-L-glutamate + CoA + H(+)</text>
        <dbReference type="Rhea" id="RHEA:24292"/>
        <dbReference type="ChEBI" id="CHEBI:15378"/>
        <dbReference type="ChEBI" id="CHEBI:29985"/>
        <dbReference type="ChEBI" id="CHEBI:44337"/>
        <dbReference type="ChEBI" id="CHEBI:57287"/>
        <dbReference type="ChEBI" id="CHEBI:57288"/>
        <dbReference type="EC" id="2.3.1.1"/>
    </reaction>
</comment>
<comment type="activity regulation">
    <text evidence="2">Competitively inhibited by L-ornithine.</text>
</comment>
<comment type="biophysicochemical properties">
    <kinetics>
        <KM evidence="2">0.9 mM for acetyl-CoA (AGSase activity)</KM>
        <KM evidence="2">2.7 mM for N-acetyl-L-ornithine (OATase activity)</KM>
        <KM evidence="2">19.2 mM for L-glutamate (OATase activity)</KM>
        <Vmax evidence="2">2.5 mmol/min/mg enzyme (AGSase activity)</Vmax>
        <Vmax evidence="2">27.0 mmol/min/mg enzyme (OATase activity)</Vmax>
    </kinetics>
    <phDependence>
        <text evidence="2">Optimum pH is 8 for OATase activity and 8-8.5 for AGSase activity.</text>
    </phDependence>
    <temperatureDependence>
        <text evidence="2">Optimum temperature is 75 degrees Celsius (OATase activity).</text>
    </temperatureDependence>
</comment>
<comment type="pathway">
    <text evidence="1">Amino-acid biosynthesis; L-arginine biosynthesis; L-ornithine and N-acetyl-L-glutamate from L-glutamate and N(2)-acetyl-L-ornithine (cyclic): step 1/1.</text>
</comment>
<comment type="pathway">
    <text evidence="1">Amino-acid biosynthesis; L-arginine biosynthesis; N(2)-acetyl-L-ornithine from L-glutamate: step 1/4.</text>
</comment>
<comment type="subunit">
    <text evidence="1 2 3">Heterotetramer of two alpha and two beta chains.</text>
</comment>
<comment type="subcellular location">
    <subcellularLocation>
        <location evidence="1 5">Cytoplasm</location>
    </subcellularLocation>
</comment>
<comment type="miscellaneous">
    <text evidence="6">Independently synthesized alpha and beta subunits do not reconstitute a functional protein. Self-catalyzed precursor cleavage is a necessary step to form an active enzyme, probably by directing appropriate folding and/or topological organization of the active site (PubMed:11320085).</text>
</comment>
<comment type="similarity">
    <text evidence="1 5">Belongs to the ArgJ family.</text>
</comment>
<reference key="1">
    <citation type="journal article" date="1993" name="J. Gen. Microbiol.">
        <title>Primary structure, partial purification and regulation of key enzymes of the acetyl cycle of arginine biosynthesis in Bacillus stearothermophilus: dual function of ornithine acetyltransferase.</title>
        <authorList>
            <person name="Sakanyan V."/>
            <person name="Charlier D.R.M."/>
            <person name="Legrain C."/>
            <person name="Kochikyan A."/>
            <person name="Mett I."/>
            <person name="Pierard P."/>
            <person name="Glansdorff N."/>
        </authorList>
    </citation>
    <scope>NUCLEOTIDE SEQUENCE [GENOMIC DNA]</scope>
    <source>
        <strain>NCIMB 8224 / CCM 2186 / NCA C-1235.1 / VKM B-718</strain>
    </source>
</reference>
<reference key="2">
    <citation type="journal article" date="2000" name="Eur. J. Biochem.">
        <title>Characterization and kinetic mechanism of mono- and bifunctional ornithine acetyltransferases from thermophilic microorganisms.</title>
        <authorList>
            <person name="Marc F."/>
            <person name="Weigel P."/>
            <person name="Legrain C."/>
            <person name="Almeras Y."/>
            <person name="Santrot M."/>
            <person name="Glansdorff N."/>
            <person name="Sakanyan V."/>
        </authorList>
    </citation>
    <scope>PROTEIN SEQUENCE OF 197-204</scope>
    <scope>FUNCTION AS AN OATASE AND AGSASE</scope>
    <scope>BIOPHYSICOCHEMICAL PROPERTIES</scope>
    <scope>CATALYTIC ACTIVITY</scope>
    <scope>ACTIVITY REGULATION</scope>
    <scope>REACTION MECHANISM</scope>
    <scope>SUBUNIT</scope>
    <source>
        <strain>NCIMB 8224 / CCM 2186 / NCA C-1235.1 / VKM B-718</strain>
    </source>
</reference>
<reference key="3">
    <citation type="journal article" date="2001" name="J. Biol. Chem.">
        <title>An invariant threonine is involved in self-catalyzed cleavage of the precursor protein for ornithine acetyltransferase.</title>
        <authorList>
            <person name="Marc F."/>
            <person name="Weigel P."/>
            <person name="Legrain C."/>
            <person name="Glansdorff N."/>
            <person name="Sakanyan V."/>
        </authorList>
    </citation>
    <scope>MUTAGENESIS OF THR-197</scope>
    <scope>AUTOCATALYTIC CLEAVAGE</scope>
    <scope>REACTION MECHANISM</scope>
    <scope>SUBUNIT</scope>
    <source>
        <strain>NCIMB 8224 / CCM 2186 / NCA C-1235.1 / VKM B-718</strain>
    </source>
</reference>
<organism>
    <name type="scientific">Geobacillus stearothermophilus</name>
    <name type="common">Bacillus stearothermophilus</name>
    <dbReference type="NCBI Taxonomy" id="1422"/>
    <lineage>
        <taxon>Bacteria</taxon>
        <taxon>Bacillati</taxon>
        <taxon>Bacillota</taxon>
        <taxon>Bacilli</taxon>
        <taxon>Bacillales</taxon>
        <taxon>Anoxybacillaceae</taxon>
        <taxon>Geobacillus</taxon>
    </lineage>
</organism>
<keyword id="KW-0012">Acyltransferase</keyword>
<keyword id="KW-0028">Amino-acid biosynthesis</keyword>
<keyword id="KW-0055">Arginine biosynthesis</keyword>
<keyword id="KW-0068">Autocatalytic cleavage</keyword>
<keyword id="KW-0963">Cytoplasm</keyword>
<keyword id="KW-0903">Direct protein sequencing</keyword>
<keyword id="KW-0511">Multifunctional enzyme</keyword>
<keyword id="KW-0808">Transferase</keyword>
<sequence length="410" mass="43377">MTITKQTGQVTAVADGTVVTPEGFQAAGVNAGLRYSKNDLGVILCDVPASAAAVYTQSHFQAAPLKVTQASLAVEQKLQAVIVNRPCANACTGAQGLKDAYEMRELCAKQFGLALHHVAVASTGVIGEYLPMEKIRAGIKQLVPGVTMADAEAFQTAILTTDTVMKRACYQTTIDGKTVTVGGAAKGSGMIHPNMATMLAFITTDANVSSPVLHAALRSITDVSFNQITVDGDTSTNDMVVVMASGLAGNDELTPDHPDWENFYEALRKTCEDLAKQIAKDGEGATKLIEVRVRGAKTDEEAKKIAKQIVGSNLVKTAVYGADANWGRIIGAIGYSDAEVNPDNVDVAIGPMVMLKGSEPQPFSEEEAAAYLQQETVVIEVDLHIGDGVGVAWGCDLTYDYVKINASYRT</sequence>
<evidence type="ECO:0000255" key="1">
    <source>
        <dbReference type="HAMAP-Rule" id="MF_01106"/>
    </source>
</evidence>
<evidence type="ECO:0000269" key="2">
    <source>
    </source>
</evidence>
<evidence type="ECO:0000269" key="3">
    <source>
    </source>
</evidence>
<evidence type="ECO:0000303" key="4">
    <source>
    </source>
</evidence>
<evidence type="ECO:0000305" key="5"/>
<evidence type="ECO:0000305" key="6">
    <source>
    </source>
</evidence>